<feature type="chain" id="PRO_0000388979" description="Ribosomal RNA large subunit methyltransferase M">
    <location>
        <begin position="1"/>
        <end position="365"/>
    </location>
</feature>
<feature type="active site" description="Proton acceptor" evidence="1">
    <location>
        <position position="311"/>
    </location>
</feature>
<feature type="binding site" evidence="1">
    <location>
        <position position="193"/>
    </location>
    <ligand>
        <name>S-adenosyl-L-methionine</name>
        <dbReference type="ChEBI" id="CHEBI:59789"/>
    </ligand>
</feature>
<feature type="binding site" evidence="1">
    <location>
        <begin position="226"/>
        <end position="229"/>
    </location>
    <ligand>
        <name>S-adenosyl-L-methionine</name>
        <dbReference type="ChEBI" id="CHEBI:59789"/>
    </ligand>
</feature>
<feature type="binding site" evidence="1">
    <location>
        <position position="245"/>
    </location>
    <ligand>
        <name>S-adenosyl-L-methionine</name>
        <dbReference type="ChEBI" id="CHEBI:59789"/>
    </ligand>
</feature>
<feature type="binding site" evidence="1">
    <location>
        <position position="265"/>
    </location>
    <ligand>
        <name>S-adenosyl-L-methionine</name>
        <dbReference type="ChEBI" id="CHEBI:59789"/>
    </ligand>
</feature>
<feature type="binding site" evidence="1">
    <location>
        <position position="282"/>
    </location>
    <ligand>
        <name>S-adenosyl-L-methionine</name>
        <dbReference type="ChEBI" id="CHEBI:59789"/>
    </ligand>
</feature>
<protein>
    <recommendedName>
        <fullName evidence="1">Ribosomal RNA large subunit methyltransferase M</fullName>
        <ecNumber evidence="1">2.1.1.186</ecNumber>
    </recommendedName>
    <alternativeName>
        <fullName evidence="1">23S rRNA (cytidine2498-2'-O)-methyltransferase</fullName>
    </alternativeName>
    <alternativeName>
        <fullName evidence="1">23S rRNA 2'-O-ribose methyltransferase RlmM</fullName>
    </alternativeName>
</protein>
<reference key="1">
    <citation type="journal article" date="2008" name="ISME J.">
        <title>Comparative genomics of two ecotypes of the marine planktonic copiotroph Alteromonas macleodii suggests alternative lifestyles associated with different kinds of particulate organic matter.</title>
        <authorList>
            <person name="Ivars-Martinez E."/>
            <person name="Martin-Cuadrado A.-B."/>
            <person name="D'Auria G."/>
            <person name="Mira A."/>
            <person name="Ferriera S."/>
            <person name="Johnson J."/>
            <person name="Friedman R."/>
            <person name="Rodriguez-Valera F."/>
        </authorList>
    </citation>
    <scope>NUCLEOTIDE SEQUENCE [LARGE SCALE GENOMIC DNA]</scope>
    <source>
        <strain>DSM 17117 / CIP 110805 / LMG 28347 / Deep ecotype</strain>
    </source>
</reference>
<keyword id="KW-0963">Cytoplasm</keyword>
<keyword id="KW-0489">Methyltransferase</keyword>
<keyword id="KW-0698">rRNA processing</keyword>
<keyword id="KW-0949">S-adenosyl-L-methionine</keyword>
<keyword id="KW-0808">Transferase</keyword>
<accession>B4RSU6</accession>
<accession>F2G7M9</accession>
<sequence>MSDTSILAYCRPGYENDTANELTSRYGEAGFYGYPVSKKNSGFAHYHLYDAAQLEQTVTQFAVHDSIFPRQLVAVFAAINDVEKEDRVGQVLDALKEVEKPFSIFGAVDVEYPDTEEGKTLAKFCRKFTVPLRQALRKAGWLTAKENLGKPKLHIFFASFEICYIGFTLPSHASRDHLGICRLKFPSDSPSRSTLKLEDALVNMLSNKQQSKVLRSGGRAVDLGACPGGWTYQLVKRGMYVEAIDNGLIADSLMSTGLVEHHAADGFTYRPQFGRVDLLVCDMIEQPDRVAKLMGDWLVKHWATHAIFNIKLPMKRRYETVVEAMTSLNSRLDALDDAFAVKVRHLYHDRDEVTVTIVRTSKDEV</sequence>
<comment type="function">
    <text evidence="1">Catalyzes the 2'-O-methylation at nucleotide C2498 in 23S rRNA.</text>
</comment>
<comment type="catalytic activity">
    <reaction evidence="1">
        <text>cytidine(2498) in 23S rRNA + S-adenosyl-L-methionine = 2'-O-methylcytidine(2498) in 23S rRNA + S-adenosyl-L-homocysteine + H(+)</text>
        <dbReference type="Rhea" id="RHEA:42788"/>
        <dbReference type="Rhea" id="RHEA-COMP:10244"/>
        <dbReference type="Rhea" id="RHEA-COMP:10245"/>
        <dbReference type="ChEBI" id="CHEBI:15378"/>
        <dbReference type="ChEBI" id="CHEBI:57856"/>
        <dbReference type="ChEBI" id="CHEBI:59789"/>
        <dbReference type="ChEBI" id="CHEBI:74495"/>
        <dbReference type="ChEBI" id="CHEBI:82748"/>
        <dbReference type="EC" id="2.1.1.186"/>
    </reaction>
</comment>
<comment type="subunit">
    <text evidence="1">Monomer.</text>
</comment>
<comment type="subcellular location">
    <subcellularLocation>
        <location evidence="1">Cytoplasm</location>
    </subcellularLocation>
</comment>
<comment type="similarity">
    <text evidence="1">Belongs to the class I-like SAM-binding methyltransferase superfamily. RNA methyltransferase RlmE family. RlmM subfamily.</text>
</comment>
<dbReference type="EC" id="2.1.1.186" evidence="1"/>
<dbReference type="EMBL" id="CP001103">
    <property type="protein sequence ID" value="AEA97679.1"/>
    <property type="molecule type" value="Genomic_DNA"/>
</dbReference>
<dbReference type="RefSeq" id="WP_012518013.1">
    <property type="nucleotide sequence ID" value="NC_011138.3"/>
</dbReference>
<dbReference type="SMR" id="B4RSU6"/>
<dbReference type="KEGG" id="amc:MADE_1007695"/>
<dbReference type="HOGENOM" id="CLU_043780_0_0_6"/>
<dbReference type="Proteomes" id="UP000001870">
    <property type="component" value="Chromosome"/>
</dbReference>
<dbReference type="GO" id="GO:0005737">
    <property type="term" value="C:cytoplasm"/>
    <property type="evidence" value="ECO:0007669"/>
    <property type="project" value="UniProtKB-SubCell"/>
</dbReference>
<dbReference type="GO" id="GO:0008757">
    <property type="term" value="F:S-adenosylmethionine-dependent methyltransferase activity"/>
    <property type="evidence" value="ECO:0007669"/>
    <property type="project" value="UniProtKB-UniRule"/>
</dbReference>
<dbReference type="GO" id="GO:0032259">
    <property type="term" value="P:methylation"/>
    <property type="evidence" value="ECO:0007669"/>
    <property type="project" value="UniProtKB-KW"/>
</dbReference>
<dbReference type="GO" id="GO:0006364">
    <property type="term" value="P:rRNA processing"/>
    <property type="evidence" value="ECO:0007669"/>
    <property type="project" value="UniProtKB-UniRule"/>
</dbReference>
<dbReference type="Gene3D" id="3.30.2300.20">
    <property type="match status" value="1"/>
</dbReference>
<dbReference type="Gene3D" id="3.30.70.2810">
    <property type="match status" value="1"/>
</dbReference>
<dbReference type="Gene3D" id="3.40.50.150">
    <property type="entry name" value="Vaccinia Virus protein VP39"/>
    <property type="match status" value="1"/>
</dbReference>
<dbReference type="HAMAP" id="MF_01551">
    <property type="entry name" value="23SrRNA_methyltr_M"/>
    <property type="match status" value="1"/>
</dbReference>
<dbReference type="InterPro" id="IPR040739">
    <property type="entry name" value="RlmM_FDX"/>
</dbReference>
<dbReference type="InterPro" id="IPR048646">
    <property type="entry name" value="RlmM_THUMP-like"/>
</dbReference>
<dbReference type="InterPro" id="IPR002877">
    <property type="entry name" value="RNA_MeTrfase_FtsJ_dom"/>
</dbReference>
<dbReference type="InterPro" id="IPR011224">
    <property type="entry name" value="rRNA_MeTrfase_M"/>
</dbReference>
<dbReference type="InterPro" id="IPR029063">
    <property type="entry name" value="SAM-dependent_MTases_sf"/>
</dbReference>
<dbReference type="NCBIfam" id="NF008734">
    <property type="entry name" value="PRK11760.1"/>
    <property type="match status" value="1"/>
</dbReference>
<dbReference type="PANTHER" id="PTHR37524">
    <property type="entry name" value="RIBOSOMAL RNA LARGE SUBUNIT METHYLTRANSFERASE M"/>
    <property type="match status" value="1"/>
</dbReference>
<dbReference type="PANTHER" id="PTHR37524:SF2">
    <property type="entry name" value="RIBOSOMAL RNA METHYLTRANSFERASE FTSJ DOMAIN-CONTAINING PROTEIN"/>
    <property type="match status" value="1"/>
</dbReference>
<dbReference type="Pfam" id="PF01728">
    <property type="entry name" value="FtsJ"/>
    <property type="match status" value="1"/>
</dbReference>
<dbReference type="Pfam" id="PF18125">
    <property type="entry name" value="RlmM_FDX"/>
    <property type="match status" value="1"/>
</dbReference>
<dbReference type="Pfam" id="PF21239">
    <property type="entry name" value="RLMM_N"/>
    <property type="match status" value="1"/>
</dbReference>
<dbReference type="PIRSF" id="PIRSF028774">
    <property type="entry name" value="UCP028774"/>
    <property type="match status" value="1"/>
</dbReference>
<dbReference type="SUPFAM" id="SSF53335">
    <property type="entry name" value="S-adenosyl-L-methionine-dependent methyltransferases"/>
    <property type="match status" value="1"/>
</dbReference>
<evidence type="ECO:0000255" key="1">
    <source>
        <dbReference type="HAMAP-Rule" id="MF_01551"/>
    </source>
</evidence>
<gene>
    <name evidence="1" type="primary">rlmM</name>
    <name type="ordered locus">MADE_1007695</name>
</gene>
<organism>
    <name type="scientific">Alteromonas mediterranea (strain DSM 17117 / CIP 110805 / LMG 28347 / Deep ecotype)</name>
    <dbReference type="NCBI Taxonomy" id="1774373"/>
    <lineage>
        <taxon>Bacteria</taxon>
        <taxon>Pseudomonadati</taxon>
        <taxon>Pseudomonadota</taxon>
        <taxon>Gammaproteobacteria</taxon>
        <taxon>Alteromonadales</taxon>
        <taxon>Alteromonadaceae</taxon>
        <taxon>Alteromonas/Salinimonas group</taxon>
        <taxon>Alteromonas</taxon>
    </lineage>
</organism>
<name>RLMM_ALTMD</name>
<proteinExistence type="inferred from homology"/>